<comment type="function">
    <text evidence="1 6">Probably plays a role in biomineralization (Probable). Required for stable accumulation of MamB (By similarity). Probably binds and transports iron. May nucleate iron crystal formation (By similarity).</text>
</comment>
<comment type="subunit">
    <text evidence="1">Forms homodimers via its C-terminal domain (CTD) in the presence of metal cations (By similarity). Interacts with MamB via their CTD (By similarity).</text>
</comment>
<comment type="subcellular location">
    <subcellularLocation>
        <location evidence="1">Magnetosome membrane</location>
        <topology evidence="2">Multi-pass membrane protein</topology>
    </subcellularLocation>
    <subcellularLocation>
        <location evidence="1">Cell inner membrane</location>
        <topology evidence="2">Multi-pass membrane protein</topology>
    </subcellularLocation>
</comment>
<comment type="induction">
    <text evidence="6">Part of the probable 18 gene mamAB operon.</text>
</comment>
<comment type="domain">
    <text evidence="1">The C-terminal domain (CTD) is probably responsible for hetero- and homodimerization; it assumes a V-shaped, dimeric metallo-chaperone-like fold that can open and close. Binds up to 3 divalent metal cations (probably iron in vivo); upon binding there is a conformational shift to a tighter dimer.</text>
</comment>
<comment type="disruption phenotype">
    <text evidence="3">Cells have no magnetic response but still make empty magnetosome membranes; magnetosome proteins MamA and MamE localize normally (PubMed:20212111). Deletion of genes mamH to mamV (amb0961 to amb0978) gives cells with no magnetosomes and no magnetic response (PubMed:20212111).</text>
</comment>
<comment type="miscellaneous">
    <text evidence="5">This bacteria makes up to 20 cubo-octahedral magnetosomes of about 45 nm in diameter which contain membrane-bound crystals of magnetite (Fe(3)O(4)).</text>
</comment>
<comment type="miscellaneous">
    <text evidence="4">Expression of just the minimal mamAB gene cluster (amb0961 to amb0978), including this gene, is sufficient to form a minimal magnetosome chain with small magnetite particles.</text>
</comment>
<comment type="similarity">
    <text evidence="5">Belongs to the cation diffusion facilitator (CDF) transporter (TC 2.A.4) family.</text>
</comment>
<evidence type="ECO:0000250" key="1">
    <source>
        <dbReference type="UniProtKB" id="V6F235"/>
    </source>
</evidence>
<evidence type="ECO:0000255" key="2"/>
<evidence type="ECO:0000269" key="3">
    <source>
    </source>
</evidence>
<evidence type="ECO:0000269" key="4">
    <source>
    </source>
</evidence>
<evidence type="ECO:0000305" key="5"/>
<evidence type="ECO:0000305" key="6">
    <source>
    </source>
</evidence>
<dbReference type="EMBL" id="AP007255">
    <property type="protein sequence ID" value="BAE49771.1"/>
    <property type="molecule type" value="Genomic_DNA"/>
</dbReference>
<dbReference type="RefSeq" id="WP_011383399.1">
    <property type="nucleotide sequence ID" value="NC_007626.1"/>
</dbReference>
<dbReference type="SMR" id="Q2W8Q4"/>
<dbReference type="STRING" id="342108.amb0967"/>
<dbReference type="KEGG" id="mag:amb0967"/>
<dbReference type="HOGENOM" id="CLU_013430_3_6_5"/>
<dbReference type="OrthoDB" id="9806522at2"/>
<dbReference type="Proteomes" id="UP000007058">
    <property type="component" value="Chromosome"/>
</dbReference>
<dbReference type="GO" id="GO:0110146">
    <property type="term" value="C:magnetosome membrane"/>
    <property type="evidence" value="ECO:0000250"/>
    <property type="project" value="UniProtKB"/>
</dbReference>
<dbReference type="GO" id="GO:0005886">
    <property type="term" value="C:plasma membrane"/>
    <property type="evidence" value="ECO:0007669"/>
    <property type="project" value="UniProtKB-SubCell"/>
</dbReference>
<dbReference type="GO" id="GO:0046872">
    <property type="term" value="F:metal ion binding"/>
    <property type="evidence" value="ECO:0007669"/>
    <property type="project" value="UniProtKB-KW"/>
</dbReference>
<dbReference type="GO" id="GO:0008324">
    <property type="term" value="F:monoatomic cation transmembrane transporter activity"/>
    <property type="evidence" value="ECO:0007669"/>
    <property type="project" value="InterPro"/>
</dbReference>
<dbReference type="GO" id="GO:0006826">
    <property type="term" value="P:iron ion transport"/>
    <property type="evidence" value="ECO:0007669"/>
    <property type="project" value="UniProtKB-KW"/>
</dbReference>
<dbReference type="Gene3D" id="1.20.1510.10">
    <property type="entry name" value="Cation efflux protein transmembrane domain"/>
    <property type="match status" value="1"/>
</dbReference>
<dbReference type="Gene3D" id="3.30.70.1350">
    <property type="entry name" value="Cation efflux protein, cytoplasmic domain"/>
    <property type="match status" value="1"/>
</dbReference>
<dbReference type="InterPro" id="IPR002524">
    <property type="entry name" value="Cation_efflux"/>
</dbReference>
<dbReference type="InterPro" id="IPR027470">
    <property type="entry name" value="Cation_efflux_CTD"/>
</dbReference>
<dbReference type="InterPro" id="IPR036837">
    <property type="entry name" value="Cation_efflux_CTD_sf"/>
</dbReference>
<dbReference type="InterPro" id="IPR027469">
    <property type="entry name" value="Cation_efflux_TMD_sf"/>
</dbReference>
<dbReference type="InterPro" id="IPR050291">
    <property type="entry name" value="CDF_Transporter"/>
</dbReference>
<dbReference type="InterPro" id="IPR053502">
    <property type="entry name" value="Magnetosome_CDF-Related"/>
</dbReference>
<dbReference type="NCBIfam" id="TIGR01297">
    <property type="entry name" value="CDF"/>
    <property type="match status" value="1"/>
</dbReference>
<dbReference type="NCBIfam" id="NF033615">
    <property type="entry name" value="CDF_MamM"/>
    <property type="match status" value="1"/>
</dbReference>
<dbReference type="PANTHER" id="PTHR43840">
    <property type="entry name" value="MITOCHONDRIAL METAL TRANSPORTER 1-RELATED"/>
    <property type="match status" value="1"/>
</dbReference>
<dbReference type="PANTHER" id="PTHR43840:SF15">
    <property type="entry name" value="MITOCHONDRIAL METAL TRANSPORTER 1-RELATED"/>
    <property type="match status" value="1"/>
</dbReference>
<dbReference type="Pfam" id="PF01545">
    <property type="entry name" value="Cation_efflux"/>
    <property type="match status" value="1"/>
</dbReference>
<dbReference type="Pfam" id="PF16916">
    <property type="entry name" value="ZT_dimer"/>
    <property type="match status" value="1"/>
</dbReference>
<dbReference type="SUPFAM" id="SSF160240">
    <property type="entry name" value="Cation efflux protein cytoplasmic domain-like"/>
    <property type="match status" value="1"/>
</dbReference>
<dbReference type="SUPFAM" id="SSF161111">
    <property type="entry name" value="Cation efflux protein transmembrane domain-like"/>
    <property type="match status" value="1"/>
</dbReference>
<organism>
    <name type="scientific">Paramagnetospirillum magneticum (strain ATCC 700264 / AMB-1)</name>
    <name type="common">Magnetospirillum magneticum</name>
    <dbReference type="NCBI Taxonomy" id="342108"/>
    <lineage>
        <taxon>Bacteria</taxon>
        <taxon>Pseudomonadati</taxon>
        <taxon>Pseudomonadota</taxon>
        <taxon>Alphaproteobacteria</taxon>
        <taxon>Rhodospirillales</taxon>
        <taxon>Magnetospirillaceae</taxon>
        <taxon>Paramagnetospirillum</taxon>
    </lineage>
</organism>
<name>MAMM_PARM1</name>
<feature type="chain" id="PRO_0000447740" description="Magnetosome protein MamM">
    <location>
        <begin position="1"/>
        <end position="318"/>
    </location>
</feature>
<feature type="transmembrane region" description="Helical" evidence="2">
    <location>
        <begin position="13"/>
        <end position="33"/>
    </location>
</feature>
<feature type="transmembrane region" description="Helical" evidence="2">
    <location>
        <begin position="39"/>
        <end position="59"/>
    </location>
</feature>
<feature type="transmembrane region" description="Helical" evidence="2">
    <location>
        <begin position="81"/>
        <end position="101"/>
    </location>
</feature>
<feature type="transmembrane region" description="Helical" evidence="2">
    <location>
        <begin position="117"/>
        <end position="137"/>
    </location>
</feature>
<feature type="region of interest" description="Transmembrane domain (TMD)" evidence="5">
    <location>
        <begin position="1"/>
        <end position="210"/>
    </location>
</feature>
<feature type="region of interest" description="C-terminal domain (CTD)" evidence="5">
    <location>
        <begin position="211"/>
        <end position="318"/>
    </location>
</feature>
<feature type="binding site" evidence="1">
    <location>
        <position position="249"/>
    </location>
    <ligand>
        <name>Fe cation</name>
        <dbReference type="ChEBI" id="CHEBI:24875"/>
        <label>1</label>
    </ligand>
</feature>
<feature type="binding site" evidence="1">
    <location>
        <position position="264"/>
    </location>
    <ligand>
        <name>Fe cation</name>
        <dbReference type="ChEBI" id="CHEBI:24875"/>
        <label>2</label>
    </ligand>
</feature>
<feature type="binding site" evidence="1">
    <location>
        <position position="285"/>
    </location>
    <ligand>
        <name>Fe cation</name>
        <dbReference type="ChEBI" id="CHEBI:24875"/>
        <label>1</label>
    </ligand>
</feature>
<feature type="binding site" evidence="1">
    <location>
        <position position="289"/>
    </location>
    <ligand>
        <name>Fe cation</name>
        <dbReference type="ChEBI" id="CHEBI:24875"/>
        <label>3</label>
    </ligand>
</feature>
<sequence>MRKSGCTVCSRSIGWVGLAVNTVLMVMKAFVGLIGGSQAMLADAMYSLKDMLNALMVVIGTTISSKPLDAEHPYGHGKVEFILSMVVSVVFIGLTGYLLVHAVQILLDESMHRTPHLIVLWAALVSVGVNVAMYFYSRCVAIETNSPIIKTMAKHHHGDATASGAVALGIIGAHYLNMPWIDPAVALWETIDLLLLGKVVFMDAYRGLMDHTAGEAVQNRIVDTAERVPGVRGVIHLRARYVGQDIWADMIIGVDPEHTVEQAHDICEAVQAAVCGKMRRIESLHVSAEAREAGDTSKPTFSEEPLTYDEVMLSKVDN</sequence>
<accession>Q2W8Q4</accession>
<gene>
    <name type="primary">mamM</name>
    <name type="ordered locus">amb0967</name>
</gene>
<protein>
    <recommendedName>
        <fullName evidence="5">Magnetosome protein MamM</fullName>
    </recommendedName>
    <alternativeName>
        <fullName evidence="5">Probable iron transporter MamM</fullName>
    </alternativeName>
</protein>
<keyword id="KW-0091">Biomineralization</keyword>
<keyword id="KW-0997">Cell inner membrane</keyword>
<keyword id="KW-1003">Cell membrane</keyword>
<keyword id="KW-0406">Ion transport</keyword>
<keyword id="KW-0408">Iron</keyword>
<keyword id="KW-0410">Iron transport</keyword>
<keyword id="KW-1281">Magnetosome</keyword>
<keyword id="KW-0472">Membrane</keyword>
<keyword id="KW-0479">Metal-binding</keyword>
<keyword id="KW-0812">Transmembrane</keyword>
<keyword id="KW-1133">Transmembrane helix</keyword>
<keyword id="KW-0813">Transport</keyword>
<proteinExistence type="inferred from homology"/>
<reference key="1">
    <citation type="journal article" date="2005" name="DNA Res.">
        <title>Complete genome sequence of the facultative anaerobic magnetotactic bacterium Magnetospirillum sp. strain AMB-1.</title>
        <authorList>
            <person name="Matsunaga T."/>
            <person name="Okamura Y."/>
            <person name="Fukuda Y."/>
            <person name="Wahyudi A.T."/>
            <person name="Murase Y."/>
            <person name="Takeyama H."/>
        </authorList>
    </citation>
    <scope>NUCLEOTIDE SEQUENCE [LARGE SCALE GENOMIC DNA]</scope>
    <source>
        <strain>ATCC 700264 / AMB-1</strain>
    </source>
</reference>
<reference key="2">
    <citation type="journal article" date="2010" name="Proc. Natl. Acad. Sci. U.S.A.">
        <title>Comprehensive genetic dissection of the magnetosome gene island reveals the step-wise assembly of a prokaryotic organelle.</title>
        <authorList>
            <person name="Murat D."/>
            <person name="Quinlan A."/>
            <person name="Vali H."/>
            <person name="Komeili A."/>
        </authorList>
    </citation>
    <scope>FUNCTION</scope>
    <scope>PROBABLE OPERON</scope>
    <scope>DISRUPTION PHENOTYPE</scope>
    <source>
        <strain>ATCC 700264 / AMB-1</strain>
    </source>
</reference>
<reference key="3">
    <citation type="journal article" date="2012" name="Mol. Microbiol.">
        <title>The magnetosome membrane protein, MmsF, is a major regulator of magnetite biomineralization in Magnetospirillum magneticum AMB-1.</title>
        <authorList>
            <person name="Murat D."/>
            <person name="Falahati V."/>
            <person name="Bertinetti L."/>
            <person name="Csencsits R."/>
            <person name="Koernig A."/>
            <person name="Downing K."/>
            <person name="Faivre D."/>
            <person name="Komeili A."/>
        </authorList>
    </citation>
    <scope>MINIMAL MAGNETOSOME ISLAND</scope>
    <source>
        <strain>ATCC 700264 / AMB-1</strain>
    </source>
</reference>